<reference evidence="9" key="1">
    <citation type="journal article" date="2014" name="Plant Physiol. Biochem.">
        <title>Identification of caleosin and two oleosin isoforms in oil bodies of pine megagametophytes.</title>
        <authorList>
            <person name="Pasaribu B."/>
            <person name="Chung T.Y."/>
            <person name="Chen C.S."/>
            <person name="Wang S.L."/>
            <person name="Jiang P.L."/>
            <person name="Tzen J.T."/>
        </authorList>
    </citation>
    <scope>NUCLEOTIDE SEQUENCE [MRNA]</scope>
    <scope>PROTEIN SEQUENCE OF 22-37; 130-144; 132-144 AND 150-156</scope>
    <scope>SUBCELLULAR LOCATION</scope>
    <scope>TISSUE SPECIFICITY</scope>
    <scope>IDENTIFICATION BY MASS SPECTROMETRY</scope>
    <source>
        <tissue evidence="6">Megagametophyte</tissue>
    </source>
</reference>
<keyword id="KW-0007">Acetylation</keyword>
<keyword id="KW-0106">Calcium</keyword>
<keyword id="KW-0903">Direct protein sequencing</keyword>
<keyword id="KW-0256">Endoplasmic reticulum</keyword>
<keyword id="KW-0349">Heme</keyword>
<keyword id="KW-0408">Iron</keyword>
<keyword id="KW-0551">Lipid droplet</keyword>
<keyword id="KW-0472">Membrane</keyword>
<keyword id="KW-0479">Metal-binding</keyword>
<keyword id="KW-0492">Microsome</keyword>
<keyword id="KW-0560">Oxidoreductase</keyword>
<accession>A0A060LAL9</accession>
<name>PXG_PINMS</name>
<comment type="function">
    <text evidence="2">Calcium-binding peroxygenase involved in the degradation of storage lipid in oil bodies.</text>
</comment>
<comment type="catalytic activity">
    <reaction evidence="2">
        <text>RH + ROOH = ROH + ROH.</text>
        <dbReference type="EC" id="1.11.2.3"/>
    </reaction>
</comment>
<comment type="cofactor">
    <cofactor>
        <name>heme b</name>
        <dbReference type="ChEBI" id="CHEBI:60344"/>
    </cofactor>
    <text evidence="2">Binds 1 heme b (iron(II)-protoporphyrin IX) group.</text>
</comment>
<comment type="cofactor">
    <cofactor evidence="1">
        <name>Ca(2+)</name>
        <dbReference type="ChEBI" id="CHEBI:29108"/>
    </cofactor>
</comment>
<comment type="subunit">
    <text evidence="2">Homodimer.</text>
</comment>
<comment type="subcellular location">
    <subcellularLocation>
        <location evidence="5">Lipid droplet</location>
    </subcellularLocation>
    <subcellularLocation>
        <location evidence="3">Microsome membrane</location>
    </subcellularLocation>
</comment>
<comment type="tissue specificity">
    <text evidence="5">Expressed in megagametophytes (at protein level).</text>
</comment>
<comment type="domain">
    <text evidence="7">Transmembrane regions are predicted by sequence analysis tools, but these regions probably constitute hydrophobic domains associated to phospholipids.</text>
</comment>
<comment type="domain">
    <text evidence="7">The proline-knot motif may be involved in targeting to lipid bodies.</text>
</comment>
<comment type="similarity">
    <text evidence="7">Belongs to the caleosin family.</text>
</comment>
<protein>
    <recommendedName>
        <fullName evidence="7">Peroxygenase</fullName>
        <ecNumber evidence="2">1.11.2.3</ecNumber>
    </recommendedName>
    <alternativeName>
        <fullName evidence="6 9">Caleosin</fullName>
    </alternativeName>
</protein>
<sequence>MASNESLQTTAAMAPVTIERRVNPNLDDELPKPFLPRALVAVDTEHPSGTPGHQHGDMSVLQQHVAFSNRNNDGIVYPWETFLGFRAVGFNIIISFFGCLIINIFLSYPTLPGWIPSPFFPIYIDRIHRAKHGSDSEVYDTEGRFVPAKFEEIFTKNAKTHPDKLSFSELWNLTEHNRNALDPLGWIAAKLEWFLLYSLAKDPHGFVPKEAARGVFDGSLFEFCEKSRKVKQATVKSLTFKI</sequence>
<proteinExistence type="evidence at protein level"/>
<organism>
    <name type="scientific">Pinus massoniana</name>
    <name type="common">Chinese red pine</name>
    <dbReference type="NCBI Taxonomy" id="88730"/>
    <lineage>
        <taxon>Eukaryota</taxon>
        <taxon>Viridiplantae</taxon>
        <taxon>Streptophyta</taxon>
        <taxon>Embryophyta</taxon>
        <taxon>Tracheophyta</taxon>
        <taxon>Spermatophyta</taxon>
        <taxon>Pinopsida</taxon>
        <taxon>Pinidae</taxon>
        <taxon>Conifers I</taxon>
        <taxon>Pinales</taxon>
        <taxon>Pinaceae</taxon>
        <taxon>Pinus</taxon>
        <taxon>Pinus subgen. Pinus</taxon>
    </lineage>
</organism>
<evidence type="ECO:0000250" key="1">
    <source>
        <dbReference type="UniProtKB" id="O22788"/>
    </source>
</evidence>
<evidence type="ECO:0000250" key="2">
    <source>
        <dbReference type="UniProtKB" id="O81270"/>
    </source>
</evidence>
<evidence type="ECO:0000250" key="3">
    <source>
        <dbReference type="UniProtKB" id="Q9SQ57"/>
    </source>
</evidence>
<evidence type="ECO:0000255" key="4"/>
<evidence type="ECO:0000269" key="5">
    <source>
    </source>
</evidence>
<evidence type="ECO:0000303" key="6">
    <source>
    </source>
</evidence>
<evidence type="ECO:0000305" key="7"/>
<evidence type="ECO:0000305" key="8">
    <source>
    </source>
</evidence>
<evidence type="ECO:0000312" key="9">
    <source>
        <dbReference type="EMBL" id="AIC74541.1"/>
    </source>
</evidence>
<feature type="initiator methionine" description="Removed" evidence="3">
    <location>
        <position position="1"/>
    </location>
</feature>
<feature type="chain" id="PRO_0000450064" description="Peroxygenase" evidence="3">
    <location>
        <begin position="2"/>
        <end position="242"/>
    </location>
</feature>
<feature type="domain" description="EF-hand" evidence="3">
    <location>
        <begin position="56"/>
        <end position="91"/>
    </location>
</feature>
<feature type="short sequence motif" description="Proline-knot" evidence="8">
    <location>
        <begin position="112"/>
        <end position="121"/>
    </location>
</feature>
<feature type="binding site" description="axial binding residue" evidence="2">
    <location>
        <position position="64"/>
    </location>
    <ligand>
        <name>heme</name>
        <dbReference type="ChEBI" id="CHEBI:30413"/>
    </ligand>
    <ligandPart>
        <name>Fe</name>
        <dbReference type="ChEBI" id="CHEBI:18248"/>
    </ligandPart>
</feature>
<feature type="binding site" evidence="4">
    <location>
        <position position="71"/>
    </location>
    <ligand>
        <name>Ca(2+)</name>
        <dbReference type="ChEBI" id="CHEBI:29108"/>
    </ligand>
</feature>
<feature type="binding site" evidence="4">
    <location>
        <position position="73"/>
    </location>
    <ligand>
        <name>Ca(2+)</name>
        <dbReference type="ChEBI" id="CHEBI:29108"/>
    </ligand>
</feature>
<feature type="binding site" evidence="4">
    <location>
        <position position="80"/>
    </location>
    <ligand>
        <name>Ca(2+)</name>
        <dbReference type="ChEBI" id="CHEBI:29108"/>
    </ligand>
</feature>
<feature type="modified residue" description="N-acetylalanine" evidence="3">
    <location>
        <position position="2"/>
    </location>
</feature>
<dbReference type="EC" id="1.11.2.3" evidence="2"/>
<dbReference type="EMBL" id="KJ415240">
    <property type="protein sequence ID" value="AIC74541.1"/>
    <property type="molecule type" value="mRNA"/>
</dbReference>
<dbReference type="GO" id="GO:0005783">
    <property type="term" value="C:endoplasmic reticulum"/>
    <property type="evidence" value="ECO:0007669"/>
    <property type="project" value="UniProtKB-KW"/>
</dbReference>
<dbReference type="GO" id="GO:0016020">
    <property type="term" value="C:membrane"/>
    <property type="evidence" value="ECO:0007669"/>
    <property type="project" value="UniProtKB-KW"/>
</dbReference>
<dbReference type="GO" id="GO:0012511">
    <property type="term" value="C:monolayer-surrounded lipid storage body"/>
    <property type="evidence" value="ECO:0000314"/>
    <property type="project" value="UniProtKB"/>
</dbReference>
<dbReference type="GO" id="GO:0005509">
    <property type="term" value="F:calcium ion binding"/>
    <property type="evidence" value="ECO:0000250"/>
    <property type="project" value="UniProtKB"/>
</dbReference>
<dbReference type="GO" id="GO:0020037">
    <property type="term" value="F:heme binding"/>
    <property type="evidence" value="ECO:0000250"/>
    <property type="project" value="UniProtKB"/>
</dbReference>
<dbReference type="GO" id="GO:0004497">
    <property type="term" value="F:monooxygenase activity"/>
    <property type="evidence" value="ECO:0007669"/>
    <property type="project" value="TreeGrafter"/>
</dbReference>
<dbReference type="GO" id="GO:1990137">
    <property type="term" value="F:plant seed peroxygenase activity"/>
    <property type="evidence" value="ECO:0000250"/>
    <property type="project" value="UniProtKB"/>
</dbReference>
<dbReference type="GO" id="GO:0042803">
    <property type="term" value="F:protein homodimerization activity"/>
    <property type="evidence" value="ECO:0000250"/>
    <property type="project" value="UniProtKB"/>
</dbReference>
<dbReference type="GO" id="GO:0010888">
    <property type="term" value="P:negative regulation of lipid storage"/>
    <property type="evidence" value="ECO:0000250"/>
    <property type="project" value="UniProtKB"/>
</dbReference>
<dbReference type="InterPro" id="IPR007736">
    <property type="entry name" value="Caleosin-related"/>
</dbReference>
<dbReference type="PANTHER" id="PTHR31495:SF20">
    <property type="entry name" value="CALEOSIN-RELATED FAMILY PROTEIN"/>
    <property type="match status" value="1"/>
</dbReference>
<dbReference type="PANTHER" id="PTHR31495">
    <property type="entry name" value="PEROXYGENASE 3-RELATED"/>
    <property type="match status" value="1"/>
</dbReference>
<dbReference type="Pfam" id="PF05042">
    <property type="entry name" value="Caleosin"/>
    <property type="match status" value="1"/>
</dbReference>